<accession>Q05E21</accession>
<evidence type="ECO:0000255" key="1">
    <source>
        <dbReference type="HAMAP-Rule" id="MF_01471"/>
    </source>
</evidence>
<dbReference type="EC" id="3.1.-.-" evidence="1"/>
<dbReference type="EMBL" id="BA000002">
    <property type="protein sequence ID" value="BAF34780.1"/>
    <property type="molecule type" value="Genomic_DNA"/>
</dbReference>
<dbReference type="SMR" id="Q05E21"/>
<dbReference type="STRING" id="272557.APE_1239a"/>
<dbReference type="EnsemblBacteria" id="BAF34780">
    <property type="protein sequence ID" value="BAF34780"/>
    <property type="gene ID" value="APE_1239a"/>
</dbReference>
<dbReference type="KEGG" id="ape:APE_1239a"/>
<dbReference type="eggNOG" id="arCOG04194">
    <property type="taxonomic scope" value="Archaea"/>
</dbReference>
<dbReference type="Proteomes" id="UP000002518">
    <property type="component" value="Chromosome"/>
</dbReference>
<dbReference type="GO" id="GO:0046872">
    <property type="term" value="F:metal ion binding"/>
    <property type="evidence" value="ECO:0007669"/>
    <property type="project" value="UniProtKB-UniRule"/>
</dbReference>
<dbReference type="GO" id="GO:0004521">
    <property type="term" value="F:RNA endonuclease activity"/>
    <property type="evidence" value="ECO:0007669"/>
    <property type="project" value="InterPro"/>
</dbReference>
<dbReference type="GO" id="GO:0051607">
    <property type="term" value="P:defense response to virus"/>
    <property type="evidence" value="ECO:0007669"/>
    <property type="project" value="UniProtKB-UniRule"/>
</dbReference>
<dbReference type="GO" id="GO:0043571">
    <property type="term" value="P:maintenance of CRISPR repeat elements"/>
    <property type="evidence" value="ECO:0007669"/>
    <property type="project" value="UniProtKB-UniRule"/>
</dbReference>
<dbReference type="CDD" id="cd09725">
    <property type="entry name" value="Cas2_I_II_III"/>
    <property type="match status" value="1"/>
</dbReference>
<dbReference type="Gene3D" id="3.30.70.240">
    <property type="match status" value="1"/>
</dbReference>
<dbReference type="HAMAP" id="MF_01471">
    <property type="entry name" value="Cas2"/>
    <property type="match status" value="1"/>
</dbReference>
<dbReference type="InterPro" id="IPR021127">
    <property type="entry name" value="CRISPR_associated_Cas2"/>
</dbReference>
<dbReference type="InterPro" id="IPR001763">
    <property type="entry name" value="Rhodanese-like_dom"/>
</dbReference>
<dbReference type="InterPro" id="IPR019199">
    <property type="entry name" value="Virulence_VapD/CRISPR_Cas2"/>
</dbReference>
<dbReference type="NCBIfam" id="TIGR01573">
    <property type="entry name" value="cas2"/>
    <property type="match status" value="1"/>
</dbReference>
<dbReference type="PANTHER" id="PTHR34405">
    <property type="entry name" value="CRISPR-ASSOCIATED ENDORIBONUCLEASE CAS2"/>
    <property type="match status" value="1"/>
</dbReference>
<dbReference type="PANTHER" id="PTHR34405:SF3">
    <property type="entry name" value="CRISPR-ASSOCIATED ENDORIBONUCLEASE CAS2 3"/>
    <property type="match status" value="1"/>
</dbReference>
<dbReference type="Pfam" id="PF09827">
    <property type="entry name" value="CRISPR_Cas2"/>
    <property type="match status" value="1"/>
</dbReference>
<dbReference type="SUPFAM" id="SSF143430">
    <property type="entry name" value="TTP0101/SSO1404-like"/>
    <property type="match status" value="1"/>
</dbReference>
<comment type="function">
    <text evidence="1">CRISPR (clustered regularly interspaced short palindromic repeat), is an adaptive immune system that provides protection against mobile genetic elements (viruses, transposable elements and conjugative plasmids). CRISPR clusters contain sequences complementary to antecedent mobile elements and target invading nucleic acids. CRISPR clusters are transcribed and processed into CRISPR RNA (crRNA). Functions as a ssRNA-specific endoribonuclease. Involved in the integration of spacer DNA into the CRISPR cassette.</text>
</comment>
<comment type="cofactor">
    <cofactor evidence="1">
        <name>Mg(2+)</name>
        <dbReference type="ChEBI" id="CHEBI:18420"/>
    </cofactor>
</comment>
<comment type="subunit">
    <text evidence="1">Homodimer, forms a heterotetramer with a Cas1 homodimer.</text>
</comment>
<comment type="similarity">
    <text evidence="1">Belongs to the CRISPR-associated endoribonuclease Cas2 protein family.</text>
</comment>
<sequence>MVYVLIAYDISNDSKRLKAAQKLLQMGFARVQKSVYIAKGGRSLAKEAYRALQRLADSGKDKIMVMVIPGDSVRDAYGLGGSLEDGKRVVVV</sequence>
<protein>
    <recommendedName>
        <fullName evidence="1">CRISPR-associated endoribonuclease Cas2</fullName>
        <ecNumber evidence="1">3.1.-.-</ecNumber>
    </recommendedName>
</protein>
<keyword id="KW-0051">Antiviral defense</keyword>
<keyword id="KW-0255">Endonuclease</keyword>
<keyword id="KW-0378">Hydrolase</keyword>
<keyword id="KW-0460">Magnesium</keyword>
<keyword id="KW-0479">Metal-binding</keyword>
<keyword id="KW-0540">Nuclease</keyword>
<keyword id="KW-1185">Reference proteome</keyword>
<reference key="1">
    <citation type="journal article" date="1999" name="DNA Res.">
        <title>Complete genome sequence of an aerobic hyper-thermophilic crenarchaeon, Aeropyrum pernix K1.</title>
        <authorList>
            <person name="Kawarabayasi Y."/>
            <person name="Hino Y."/>
            <person name="Horikawa H."/>
            <person name="Yamazaki S."/>
            <person name="Haikawa Y."/>
            <person name="Jin-no K."/>
            <person name="Takahashi M."/>
            <person name="Sekine M."/>
            <person name="Baba S."/>
            <person name="Ankai A."/>
            <person name="Kosugi H."/>
            <person name="Hosoyama A."/>
            <person name="Fukui S."/>
            <person name="Nagai Y."/>
            <person name="Nishijima K."/>
            <person name="Nakazawa H."/>
            <person name="Takamiya M."/>
            <person name="Masuda S."/>
            <person name="Funahashi T."/>
            <person name="Tanaka T."/>
            <person name="Kudoh Y."/>
            <person name="Yamazaki J."/>
            <person name="Kushida N."/>
            <person name="Oguchi A."/>
            <person name="Aoki K."/>
            <person name="Kubota K."/>
            <person name="Nakamura Y."/>
            <person name="Nomura N."/>
            <person name="Sako Y."/>
            <person name="Kikuchi H."/>
        </authorList>
    </citation>
    <scope>NUCLEOTIDE SEQUENCE [LARGE SCALE GENOMIC DNA]</scope>
    <source>
        <strain>ATCC 700893 / DSM 11879 / JCM 9820 / NBRC 100138 / K1</strain>
    </source>
</reference>
<name>CAS2_AERPE</name>
<organism>
    <name type="scientific">Aeropyrum pernix (strain ATCC 700893 / DSM 11879 / JCM 9820 / NBRC 100138 / K1)</name>
    <dbReference type="NCBI Taxonomy" id="272557"/>
    <lineage>
        <taxon>Archaea</taxon>
        <taxon>Thermoproteota</taxon>
        <taxon>Thermoprotei</taxon>
        <taxon>Desulfurococcales</taxon>
        <taxon>Desulfurococcaceae</taxon>
        <taxon>Aeropyrum</taxon>
    </lineage>
</organism>
<gene>
    <name evidence="1" type="primary">cas2</name>
    <name type="ordered locus">APE_1239a</name>
</gene>
<feature type="chain" id="PRO_0000417740" description="CRISPR-associated endoribonuclease Cas2">
    <location>
        <begin position="1"/>
        <end position="92"/>
    </location>
</feature>
<feature type="binding site" evidence="1">
    <location>
        <position position="9"/>
    </location>
    <ligand>
        <name>Mg(2+)</name>
        <dbReference type="ChEBI" id="CHEBI:18420"/>
        <note>catalytic</note>
    </ligand>
</feature>
<proteinExistence type="inferred from homology"/>